<proteinExistence type="evidence at transcript level"/>
<evidence type="ECO:0000250" key="1"/>
<evidence type="ECO:0000255" key="2">
    <source>
        <dbReference type="PROSITE-ProRule" id="PRU10037"/>
    </source>
</evidence>
<evidence type="ECO:0000305" key="3"/>
<reference key="1">
    <citation type="journal article" date="2005" name="Mol. Genet. Genomics">
        <title>A fine physical map of the rice chromosome 5.</title>
        <authorList>
            <person name="Cheng C.-H."/>
            <person name="Chung M.C."/>
            <person name="Liu S.-M."/>
            <person name="Chen S.-K."/>
            <person name="Kao F.Y."/>
            <person name="Lin S.-J."/>
            <person name="Hsiao S.-H."/>
            <person name="Tseng I.C."/>
            <person name="Hsing Y.-I.C."/>
            <person name="Wu H.-P."/>
            <person name="Chen C.-S."/>
            <person name="Shaw J.-F."/>
            <person name="Wu J."/>
            <person name="Matsumoto T."/>
            <person name="Sasaki T."/>
            <person name="Chen H.-C."/>
            <person name="Chow T.-Y."/>
        </authorList>
    </citation>
    <scope>NUCLEOTIDE SEQUENCE [LARGE SCALE GENOMIC DNA]</scope>
    <source>
        <strain>cv. Nipponbare</strain>
    </source>
</reference>
<reference key="2">
    <citation type="journal article" date="2005" name="Nature">
        <title>The map-based sequence of the rice genome.</title>
        <authorList>
            <consortium name="International rice genome sequencing project (IRGSP)"/>
        </authorList>
    </citation>
    <scope>NUCLEOTIDE SEQUENCE [LARGE SCALE GENOMIC DNA]</scope>
    <source>
        <strain>cv. Nipponbare</strain>
    </source>
</reference>
<reference key="3">
    <citation type="journal article" date="2008" name="Nucleic Acids Res.">
        <title>The rice annotation project database (RAP-DB): 2008 update.</title>
        <authorList>
            <consortium name="The rice annotation project (RAP)"/>
        </authorList>
    </citation>
    <scope>GENOME REANNOTATION</scope>
    <source>
        <strain>cv. Nipponbare</strain>
    </source>
</reference>
<reference key="4">
    <citation type="journal article" date="2013" name="Rice">
        <title>Improvement of the Oryza sativa Nipponbare reference genome using next generation sequence and optical map data.</title>
        <authorList>
            <person name="Kawahara Y."/>
            <person name="de la Bastide M."/>
            <person name="Hamilton J.P."/>
            <person name="Kanamori H."/>
            <person name="McCombie W.R."/>
            <person name="Ouyang S."/>
            <person name="Schwartz D.C."/>
            <person name="Tanaka T."/>
            <person name="Wu J."/>
            <person name="Zhou S."/>
            <person name="Childs K.L."/>
            <person name="Davidson R.M."/>
            <person name="Lin H."/>
            <person name="Quesada-Ocampo L."/>
            <person name="Vaillancourt B."/>
            <person name="Sakai H."/>
            <person name="Lee S.S."/>
            <person name="Kim J."/>
            <person name="Numa H."/>
            <person name="Itoh T."/>
            <person name="Buell C.R."/>
            <person name="Matsumoto T."/>
        </authorList>
    </citation>
    <scope>GENOME REANNOTATION</scope>
    <source>
        <strain>cv. Nipponbare</strain>
    </source>
</reference>
<reference key="5">
    <citation type="journal article" date="2005" name="PLoS Biol.">
        <title>The genomes of Oryza sativa: a history of duplications.</title>
        <authorList>
            <person name="Yu J."/>
            <person name="Wang J."/>
            <person name="Lin W."/>
            <person name="Li S."/>
            <person name="Li H."/>
            <person name="Zhou J."/>
            <person name="Ni P."/>
            <person name="Dong W."/>
            <person name="Hu S."/>
            <person name="Zeng C."/>
            <person name="Zhang J."/>
            <person name="Zhang Y."/>
            <person name="Li R."/>
            <person name="Xu Z."/>
            <person name="Li S."/>
            <person name="Li X."/>
            <person name="Zheng H."/>
            <person name="Cong L."/>
            <person name="Lin L."/>
            <person name="Yin J."/>
            <person name="Geng J."/>
            <person name="Li G."/>
            <person name="Shi J."/>
            <person name="Liu J."/>
            <person name="Lv H."/>
            <person name="Li J."/>
            <person name="Wang J."/>
            <person name="Deng Y."/>
            <person name="Ran L."/>
            <person name="Shi X."/>
            <person name="Wang X."/>
            <person name="Wu Q."/>
            <person name="Li C."/>
            <person name="Ren X."/>
            <person name="Wang J."/>
            <person name="Wang X."/>
            <person name="Li D."/>
            <person name="Liu D."/>
            <person name="Zhang X."/>
            <person name="Ji Z."/>
            <person name="Zhao W."/>
            <person name="Sun Y."/>
            <person name="Zhang Z."/>
            <person name="Bao J."/>
            <person name="Han Y."/>
            <person name="Dong L."/>
            <person name="Ji J."/>
            <person name="Chen P."/>
            <person name="Wu S."/>
            <person name="Liu J."/>
            <person name="Xiao Y."/>
            <person name="Bu D."/>
            <person name="Tan J."/>
            <person name="Yang L."/>
            <person name="Ye C."/>
            <person name="Zhang J."/>
            <person name="Xu J."/>
            <person name="Zhou Y."/>
            <person name="Yu Y."/>
            <person name="Zhang B."/>
            <person name="Zhuang S."/>
            <person name="Wei H."/>
            <person name="Liu B."/>
            <person name="Lei M."/>
            <person name="Yu H."/>
            <person name="Li Y."/>
            <person name="Xu H."/>
            <person name="Wei S."/>
            <person name="He X."/>
            <person name="Fang L."/>
            <person name="Zhang Z."/>
            <person name="Zhang Y."/>
            <person name="Huang X."/>
            <person name="Su Z."/>
            <person name="Tong W."/>
            <person name="Li J."/>
            <person name="Tong Z."/>
            <person name="Li S."/>
            <person name="Ye J."/>
            <person name="Wang L."/>
            <person name="Fang L."/>
            <person name="Lei T."/>
            <person name="Chen C.-S."/>
            <person name="Chen H.-C."/>
            <person name="Xu Z."/>
            <person name="Li H."/>
            <person name="Huang H."/>
            <person name="Zhang F."/>
            <person name="Xu H."/>
            <person name="Li N."/>
            <person name="Zhao C."/>
            <person name="Li S."/>
            <person name="Dong L."/>
            <person name="Huang Y."/>
            <person name="Li L."/>
            <person name="Xi Y."/>
            <person name="Qi Q."/>
            <person name="Li W."/>
            <person name="Zhang B."/>
            <person name="Hu W."/>
            <person name="Zhang Y."/>
            <person name="Tian X."/>
            <person name="Jiao Y."/>
            <person name="Liang X."/>
            <person name="Jin J."/>
            <person name="Gao L."/>
            <person name="Zheng W."/>
            <person name="Hao B."/>
            <person name="Liu S.-M."/>
            <person name="Wang W."/>
            <person name="Yuan L."/>
            <person name="Cao M."/>
            <person name="McDermott J."/>
            <person name="Samudrala R."/>
            <person name="Wang J."/>
            <person name="Wong G.K.-S."/>
            <person name="Yang H."/>
        </authorList>
    </citation>
    <scope>NUCLEOTIDE SEQUENCE [LARGE SCALE GENOMIC DNA]</scope>
    <source>
        <strain>cv. Nipponbare</strain>
    </source>
</reference>
<sequence>MSSQQWLGDGTARRWRELHGESDWDGLLDPFDLDLRRTVIRYGEMAQATYDAFNHEKLSPHAGLSRFAARRFFERAQLPGHSAAYRVARFVYATSCVAVPEPLILRSASRARRCRESNWIGYVAVATDEGKAALGRRDIVVAWRGTVQSLEWIKDMDFVMVPPKGLLRDKASDAMVHRGWLSMYTSRDSESSHNKDSARDQVLSEVAKLVSMYQDEELSITVTGHSLGAALATLNAFDIVENGYNRAPRAAAAAAGCPVTAFVFASPRVGGHGFKRRFDGARGLGLRLLRVRNARDVVPRYPPAPPYHGVGTELAIDTGESPYLRRPGNELVWHNLECYLHGVAGARGGEAGRFKLAVERDVALANKSYGALRDEHAVPAGWWIPSNRGMVRGADGRWTLMDREEDEDSAE</sequence>
<name>PLA6_ORYSJ</name>
<gene>
    <name type="ordered locus">Os05g0574000</name>
    <name type="ordered locus">LOC_Os05g49830</name>
    <name type="ORF">OJ1268_B08.3</name>
    <name type="ORF">OJ1735_C10.21</name>
    <name type="ORF">OsJ_19631</name>
</gene>
<comment type="function">
    <text evidence="1">Acylhydrolase that catalyzes the hydrolysis of phospholipids at the sn-1 position.</text>
</comment>
<comment type="subcellular location">
    <subcellularLocation>
        <location evidence="1">Cytoplasm</location>
    </subcellularLocation>
</comment>
<comment type="similarity">
    <text evidence="3">Belongs to the AB hydrolase superfamily. Lipase family.</text>
</comment>
<comment type="sequence caution" evidence="3">
    <conflict type="erroneous gene model prediction">
        <sequence resource="EMBL-CDS" id="BAF18300"/>
    </conflict>
</comment>
<comment type="sequence caution" evidence="3">
    <conflict type="erroneous gene model prediction">
        <sequence resource="EMBL-CDS" id="EEE64775"/>
    </conflict>
</comment>
<dbReference type="EC" id="3.1.1.-"/>
<dbReference type="EMBL" id="AC098832">
    <property type="protein sequence ID" value="AAT69580.1"/>
    <property type="molecule type" value="Genomic_DNA"/>
</dbReference>
<dbReference type="EMBL" id="AC104284">
    <property type="protein sequence ID" value="AAU44110.1"/>
    <property type="molecule type" value="Genomic_DNA"/>
</dbReference>
<dbReference type="EMBL" id="AP008211">
    <property type="protein sequence ID" value="BAF18300.2"/>
    <property type="status" value="ALT_SEQ"/>
    <property type="molecule type" value="Genomic_DNA"/>
</dbReference>
<dbReference type="EMBL" id="AP014961">
    <property type="protein sequence ID" value="BAS95455.1"/>
    <property type="molecule type" value="Genomic_DNA"/>
</dbReference>
<dbReference type="EMBL" id="CM000142">
    <property type="protein sequence ID" value="EEE64775.1"/>
    <property type="status" value="ALT_SEQ"/>
    <property type="molecule type" value="Genomic_DNA"/>
</dbReference>
<dbReference type="RefSeq" id="XP_015640670.1">
    <property type="nucleotide sequence ID" value="XM_015785184.1"/>
</dbReference>
<dbReference type="SMR" id="Q6F358"/>
<dbReference type="FunCoup" id="Q6F358">
    <property type="interactions" value="33"/>
</dbReference>
<dbReference type="STRING" id="39947.Q6F358"/>
<dbReference type="ESTHER" id="orysa-q6f358">
    <property type="family name" value="Plant_phospholipase"/>
</dbReference>
<dbReference type="PaxDb" id="39947-Q6F358"/>
<dbReference type="EnsemblPlants" id="Os05t0574000-00">
    <property type="protein sequence ID" value="Os05t0574000-00"/>
    <property type="gene ID" value="Os05g0574000"/>
</dbReference>
<dbReference type="Gramene" id="Os05t0574000-00">
    <property type="protein sequence ID" value="Os05t0574000-00"/>
    <property type="gene ID" value="Os05g0574000"/>
</dbReference>
<dbReference type="KEGG" id="dosa:Os05g0574000"/>
<dbReference type="eggNOG" id="KOG4569">
    <property type="taxonomic scope" value="Eukaryota"/>
</dbReference>
<dbReference type="HOGENOM" id="CLU_018841_0_0_1"/>
<dbReference type="InParanoid" id="Q6F358"/>
<dbReference type="OMA" id="RFAACRF"/>
<dbReference type="OrthoDB" id="438440at2759"/>
<dbReference type="Proteomes" id="UP000000763">
    <property type="component" value="Chromosome 5"/>
</dbReference>
<dbReference type="Proteomes" id="UP000007752">
    <property type="component" value="Chromosome 5"/>
</dbReference>
<dbReference type="Proteomes" id="UP000059680">
    <property type="component" value="Chromosome 5"/>
</dbReference>
<dbReference type="GO" id="GO:0005737">
    <property type="term" value="C:cytoplasm"/>
    <property type="evidence" value="ECO:0000250"/>
    <property type="project" value="UniProtKB"/>
</dbReference>
<dbReference type="GO" id="GO:0008970">
    <property type="term" value="F:phospholipase A1 activity"/>
    <property type="evidence" value="ECO:0000250"/>
    <property type="project" value="UniProtKB"/>
</dbReference>
<dbReference type="GO" id="GO:0016042">
    <property type="term" value="P:lipid catabolic process"/>
    <property type="evidence" value="ECO:0007669"/>
    <property type="project" value="UniProtKB-KW"/>
</dbReference>
<dbReference type="CDD" id="cd00519">
    <property type="entry name" value="Lipase_3"/>
    <property type="match status" value="1"/>
</dbReference>
<dbReference type="FunFam" id="3.40.50.1820:FF:000065">
    <property type="entry name" value="Phospholipase A1-II 3"/>
    <property type="match status" value="1"/>
</dbReference>
<dbReference type="Gene3D" id="3.40.50.1820">
    <property type="entry name" value="alpha/beta hydrolase"/>
    <property type="match status" value="1"/>
</dbReference>
<dbReference type="InterPro" id="IPR029058">
    <property type="entry name" value="AB_hydrolase_fold"/>
</dbReference>
<dbReference type="InterPro" id="IPR002921">
    <property type="entry name" value="Fungal_lipase-type"/>
</dbReference>
<dbReference type="InterPro" id="IPR033556">
    <property type="entry name" value="PLA"/>
</dbReference>
<dbReference type="PANTHER" id="PTHR31828:SF12">
    <property type="entry name" value="PHOSPHOLIPASE A1-II 6"/>
    <property type="match status" value="1"/>
</dbReference>
<dbReference type="PANTHER" id="PTHR31828">
    <property type="entry name" value="PHOSPHOLIPASE A1-IIGAMMA"/>
    <property type="match status" value="1"/>
</dbReference>
<dbReference type="Pfam" id="PF01764">
    <property type="entry name" value="Lipase_3"/>
    <property type="match status" value="1"/>
</dbReference>
<dbReference type="SUPFAM" id="SSF53474">
    <property type="entry name" value="alpha/beta-Hydrolases"/>
    <property type="match status" value="1"/>
</dbReference>
<dbReference type="PROSITE" id="PS00120">
    <property type="entry name" value="LIPASE_SER"/>
    <property type="match status" value="1"/>
</dbReference>
<keyword id="KW-0963">Cytoplasm</keyword>
<keyword id="KW-0378">Hydrolase</keyword>
<keyword id="KW-0442">Lipid degradation</keyword>
<keyword id="KW-0443">Lipid metabolism</keyword>
<keyword id="KW-1185">Reference proteome</keyword>
<protein>
    <recommendedName>
        <fullName>Phospholipase A1-II 6</fullName>
        <ecNumber>3.1.1.-</ecNumber>
    </recommendedName>
</protein>
<accession>Q6F358</accession>
<accession>A0A0P0WR77</accession>
<accession>B9FIG0</accession>
<accession>Q0DFS3</accession>
<feature type="chain" id="PRO_0000409371" description="Phospholipase A1-II 6">
    <location>
        <begin position="1"/>
        <end position="411"/>
    </location>
</feature>
<feature type="active site" description="Acyl-ester intermediate" evidence="1">
    <location>
        <position position="226"/>
    </location>
</feature>
<feature type="active site" description="Charge relay system" evidence="2">
    <location>
        <position position="226"/>
    </location>
</feature>
<feature type="active site" description="Charge relay system" evidence="2">
    <location>
        <position position="296"/>
    </location>
</feature>
<feature type="active site" description="Charge relay system" evidence="2">
    <location>
        <position position="334"/>
    </location>
</feature>
<organism>
    <name type="scientific">Oryza sativa subsp. japonica</name>
    <name type="common">Rice</name>
    <dbReference type="NCBI Taxonomy" id="39947"/>
    <lineage>
        <taxon>Eukaryota</taxon>
        <taxon>Viridiplantae</taxon>
        <taxon>Streptophyta</taxon>
        <taxon>Embryophyta</taxon>
        <taxon>Tracheophyta</taxon>
        <taxon>Spermatophyta</taxon>
        <taxon>Magnoliopsida</taxon>
        <taxon>Liliopsida</taxon>
        <taxon>Poales</taxon>
        <taxon>Poaceae</taxon>
        <taxon>BOP clade</taxon>
        <taxon>Oryzoideae</taxon>
        <taxon>Oryzeae</taxon>
        <taxon>Oryzinae</taxon>
        <taxon>Oryza</taxon>
        <taxon>Oryza sativa</taxon>
    </lineage>
</organism>